<feature type="chain" id="PRO_0000338010" description="Major capsid protein">
    <location>
        <begin position="1"/>
        <end position="584"/>
    </location>
</feature>
<dbReference type="EMBL" id="EU006628">
    <property type="protein sequence ID" value="ABU23712.1"/>
    <property type="molecule type" value="Genomic_DNA"/>
</dbReference>
<dbReference type="EMBL" id="EU006612">
    <property type="protein sequence ID" value="ABU23696.1"/>
    <property type="molecule type" value="Genomic_DNA"/>
</dbReference>
<dbReference type="GO" id="GO:0019028">
    <property type="term" value="C:viral capsid"/>
    <property type="evidence" value="ECO:0007669"/>
    <property type="project" value="UniProtKB-KW"/>
</dbReference>
<dbReference type="GO" id="GO:0005198">
    <property type="term" value="F:structural molecule activity"/>
    <property type="evidence" value="ECO:0007669"/>
    <property type="project" value="InterPro"/>
</dbReference>
<dbReference type="Gene3D" id="2.70.9.10">
    <property type="entry name" value="Adenovirus Type 2 Hexon, domain 4"/>
    <property type="match status" value="1"/>
</dbReference>
<dbReference type="Gene3D" id="2.70.9.20">
    <property type="entry name" value="Major capsid protein Vp54"/>
    <property type="match status" value="2"/>
</dbReference>
<dbReference type="InterPro" id="IPR031654">
    <property type="entry name" value="Capsid_N"/>
</dbReference>
<dbReference type="InterPro" id="IPR007542">
    <property type="entry name" value="MCP_C"/>
</dbReference>
<dbReference type="InterPro" id="IPR038519">
    <property type="entry name" value="MCP_C_sf"/>
</dbReference>
<dbReference type="InterPro" id="IPR016112">
    <property type="entry name" value="VP_dsDNA_II"/>
</dbReference>
<dbReference type="Pfam" id="PF16903">
    <property type="entry name" value="Capsid_N"/>
    <property type="match status" value="1"/>
</dbReference>
<dbReference type="Pfam" id="PF04451">
    <property type="entry name" value="Capsid_NCLDV"/>
    <property type="match status" value="1"/>
</dbReference>
<dbReference type="SUPFAM" id="SSF49749">
    <property type="entry name" value="Group II dsDNA viruses VP"/>
    <property type="match status" value="3"/>
</dbReference>
<organismHost>
    <name type="scientific">Haptolina ericina</name>
    <dbReference type="NCBI Taxonomy" id="156174"/>
</organismHost>
<evidence type="ECO:0000250" key="1"/>
<evidence type="ECO:0000305" key="2"/>
<name>MCP_CEV01</name>
<comment type="function">
    <text evidence="1">Major protein of the capsid.</text>
</comment>
<comment type="subcellular location">
    <subcellularLocation>
        <location evidence="2">Virion</location>
    </subcellularLocation>
</comment>
<comment type="similarity">
    <text evidence="2">Belongs to the NCLDV major capsid protein family.</text>
</comment>
<gene>
    <name type="primary">MCP</name>
</gene>
<reference key="1">
    <citation type="journal article" date="2008" name="Appl. Environ. Microbiol.">
        <title>Phylogenetic analysis of members of the Phycodnaviridae virus family, using amplified fragments of the major capsid protein gene.</title>
        <authorList>
            <person name="Larsen J.B."/>
            <person name="Larsen A."/>
            <person name="Bratbak G."/>
            <person name="Sandaa R.A."/>
        </authorList>
    </citation>
    <scope>NUCLEOTIDE SEQUENCE [GENOMIC DNA]</scope>
</reference>
<keyword id="KW-0167">Capsid protein</keyword>
<keyword id="KW-0946">Virion</keyword>
<accession>A7U6E7</accession>
<accession>A7U6D1</accession>
<organism>
    <name type="scientific">Chrysochromulina ericina virus</name>
    <name type="common">CeV01</name>
    <dbReference type="NCBI Taxonomy" id="455364"/>
    <lineage>
        <taxon>Viruses</taxon>
        <taxon>Varidnaviria</taxon>
        <taxon>Bamfordvirae</taxon>
        <taxon>Nucleocytoviricota</taxon>
        <taxon>Megaviricetes</taxon>
        <taxon>Algavirales</taxon>
        <taxon>Phycodnaviridae</taxon>
    </lineage>
</organism>
<proteinExistence type="inferred from homology"/>
<protein>
    <recommendedName>
        <fullName>Major capsid protein</fullName>
        <shortName>MCP</shortName>
    </recommendedName>
</protein>
<sequence>MGGGLMQLVAYGAQDVYLTGNPQITFWKVTYRRYTNFAMESIEQTFNGQADFGRRVTCTISRNGDLAYRTYLQVTLPEINQQMLPAGVGQNLASNVLGSTTPGANNKGLEYGVFARWLDFPGEQMISMVEVEIGGQRIDRQYGDWMHIWNQLTLTAEQQRGYYKMVGNTTQLTFITDPSFAAVDGPCATTAPTQVCAPRNALPETTLYVPFQFWYCRNPGLALPLIALQYHEIKINLDLRPIDECLWAVSSLHNVCDSAATPTKVATAYQQSLVAASLYVDYVFLDTDERRRMAQNPHEYLIEQLQFTGDESVGSSSNKIKLNFNHPCKELIWVVQPDQNVDYCASLICGTTLFQVLGAQPFNYTDAIDVLPNGVHAFRWTRICXKDLMHSSPQLVFLIRLAQLMQSLSLVGEYDEPNFEHVSLGSASAGGGFFPPASAASSRANGGAVDFQSAVSDAGTFVLTETSLDMHCWGENPVVTAKLQLNGQDRFSEREGTYFDLVQPYQHHTRSPDTGINLYSFALRPEEHQPSGTCNFSRIDNATLQLVLSNATVGGTNTAKVRVYATNYNVLRIMSGMGGLAYSN</sequence>